<comment type="function">
    <text evidence="1">Catalyzes the transfer of a methyl group from 5-methyltetrahydrofolate to homocysteine resulting in methionine formation.</text>
</comment>
<comment type="catalytic activity">
    <reaction evidence="1">
        <text>5-methyltetrahydropteroyltri-L-glutamate + L-homocysteine = tetrahydropteroyltri-L-glutamate + L-methionine</text>
        <dbReference type="Rhea" id="RHEA:21196"/>
        <dbReference type="ChEBI" id="CHEBI:57844"/>
        <dbReference type="ChEBI" id="CHEBI:58140"/>
        <dbReference type="ChEBI" id="CHEBI:58199"/>
        <dbReference type="ChEBI" id="CHEBI:58207"/>
        <dbReference type="EC" id="2.1.1.14"/>
    </reaction>
</comment>
<comment type="cofactor">
    <cofactor evidence="1">
        <name>Zn(2+)</name>
        <dbReference type="ChEBI" id="CHEBI:29105"/>
    </cofactor>
    <text evidence="1">Binds 1 zinc ion per subunit.</text>
</comment>
<comment type="pathway">
    <text evidence="1">Amino-acid biosynthesis; L-methionine biosynthesis via de novo pathway; L-methionine from L-homocysteine (MetE route): step 1/1.</text>
</comment>
<comment type="similarity">
    <text evidence="1">Belongs to the vitamin-B12 independent methionine synthase family.</text>
</comment>
<proteinExistence type="inferred from homology"/>
<gene>
    <name evidence="1" type="primary">metE</name>
    <name type="ordered locus">SE_2382</name>
</gene>
<protein>
    <recommendedName>
        <fullName evidence="1">5-methyltetrahydropteroyltriglutamate--homocysteine methyltransferase</fullName>
        <ecNumber evidence="1">2.1.1.14</ecNumber>
    </recommendedName>
    <alternativeName>
        <fullName evidence="1">Cobalamin-independent methionine synthase</fullName>
    </alternativeName>
    <alternativeName>
        <fullName evidence="1">Methionine synthase, vitamin-B12 independent isozyme</fullName>
    </alternativeName>
</protein>
<feature type="chain" id="PRO_0000098664" description="5-methyltetrahydropteroyltriglutamate--homocysteine methyltransferase">
    <location>
        <begin position="1"/>
        <end position="748"/>
    </location>
</feature>
<feature type="active site" description="Proton donor" evidence="1">
    <location>
        <position position="683"/>
    </location>
</feature>
<feature type="binding site" evidence="1">
    <location>
        <begin position="18"/>
        <end position="21"/>
    </location>
    <ligand>
        <name>5-methyltetrahydropteroyltri-L-glutamate</name>
        <dbReference type="ChEBI" id="CHEBI:58207"/>
    </ligand>
</feature>
<feature type="binding site" evidence="1">
    <location>
        <position position="112"/>
    </location>
    <ligand>
        <name>5-methyltetrahydropteroyltri-L-glutamate</name>
        <dbReference type="ChEBI" id="CHEBI:58207"/>
    </ligand>
</feature>
<feature type="binding site" evidence="1">
    <location>
        <begin position="420"/>
        <end position="422"/>
    </location>
    <ligand>
        <name>L-homocysteine</name>
        <dbReference type="ChEBI" id="CHEBI:58199"/>
    </ligand>
</feature>
<feature type="binding site" evidence="1">
    <location>
        <begin position="420"/>
        <end position="422"/>
    </location>
    <ligand>
        <name>L-methionine</name>
        <dbReference type="ChEBI" id="CHEBI:57844"/>
    </ligand>
</feature>
<feature type="binding site" evidence="1">
    <location>
        <position position="473"/>
    </location>
    <ligand>
        <name>L-homocysteine</name>
        <dbReference type="ChEBI" id="CHEBI:58199"/>
    </ligand>
</feature>
<feature type="binding site" evidence="1">
    <location>
        <position position="473"/>
    </location>
    <ligand>
        <name>L-methionine</name>
        <dbReference type="ChEBI" id="CHEBI:57844"/>
    </ligand>
</feature>
<feature type="binding site" evidence="1">
    <location>
        <position position="550"/>
    </location>
    <ligand>
        <name>5-methyltetrahydropteroyltri-L-glutamate</name>
        <dbReference type="ChEBI" id="CHEBI:58207"/>
    </ligand>
</feature>
<feature type="binding site" evidence="1">
    <location>
        <position position="588"/>
    </location>
    <ligand>
        <name>L-homocysteine</name>
        <dbReference type="ChEBI" id="CHEBI:58199"/>
    </ligand>
</feature>
<feature type="binding site" evidence="1">
    <location>
        <position position="588"/>
    </location>
    <ligand>
        <name>L-methionine</name>
        <dbReference type="ChEBI" id="CHEBI:57844"/>
    </ligand>
</feature>
<feature type="binding site" evidence="1">
    <location>
        <position position="594"/>
    </location>
    <ligand>
        <name>5-methyltetrahydropteroyltri-L-glutamate</name>
        <dbReference type="ChEBI" id="CHEBI:58207"/>
    </ligand>
</feature>
<feature type="binding site" evidence="1">
    <location>
        <position position="630"/>
    </location>
    <ligand>
        <name>Zn(2+)</name>
        <dbReference type="ChEBI" id="CHEBI:29105"/>
        <note>catalytic</note>
    </ligand>
</feature>
<feature type="binding site" evidence="1">
    <location>
        <position position="632"/>
    </location>
    <ligand>
        <name>Zn(2+)</name>
        <dbReference type="ChEBI" id="CHEBI:29105"/>
        <note>catalytic</note>
    </ligand>
</feature>
<feature type="binding site" evidence="1">
    <location>
        <position position="654"/>
    </location>
    <ligand>
        <name>Zn(2+)</name>
        <dbReference type="ChEBI" id="CHEBI:29105"/>
        <note>catalytic</note>
    </ligand>
</feature>
<feature type="binding site" evidence="1">
    <location>
        <position position="715"/>
    </location>
    <ligand>
        <name>Zn(2+)</name>
        <dbReference type="ChEBI" id="CHEBI:29105"/>
        <note>catalytic</note>
    </ligand>
</feature>
<sequence>MTTIKTSNLGFPRLGRKREWKKAIENYWAHKIDKAELDQTLTDLHKENLLLQKNYHLDSIPVGDFSLYDHILDTSLLFNIIPERFQGREVNDDLLFDIARGNKEHVASALIKWFNTNYHYIVPEWDNVEPKVEKNTLLERFKYAQSINVNAHPVIVGPITFVKLSKGGHQSFEEKVETLLPLYKEVLQSLVDAGAEYIQIDEPILVTDDSESYEDITRKAYDYFANEGLGKYLVIQTYFERVHLKFLSSLPVGGLGLDLVHDNGYNLKQIEDGDFDQSKALYAGIIDGRNVWAADIEAKKQLIETLQQHTQQLVIQPSSSLLHVPVSLDDETLDESIAEGLSFATEKLDELDALRRLFNDNDLSKYEHYKARYERFQSQSFKNLEYDFESVPTHRKSPFAKRKQLQNQRLNLPDLPTTTIGSFPQTREVRKFRADWKNNRITDAEYQEFLQNEIARWIKIQEDIGLDVLVHGEFERNDMVEFFGEKLQGFLVTKFGWVQSYGSRAVKPPVIYGDVKWTAPLTVKETVYAQSLTDKPVKGMLTGPVTILNWSFERVDVPRKVVQDQIALAIDEEVLALEEAGIKVIQVDEPALREGLPLRSEYHEQYLEDAVHSFKLATSSVHDETQIHTHMCYSQFGQIIHAIHDLDADVISIETSRSHGDLIQDFEDINYDLGIGLGVYDIHSPRIPTEEEITTAINRSLQQIDRSLFWVNPDCGLKTRKENEVKDALTVLVNAVKKKRQESESTTA</sequence>
<evidence type="ECO:0000255" key="1">
    <source>
        <dbReference type="HAMAP-Rule" id="MF_00172"/>
    </source>
</evidence>
<dbReference type="EC" id="2.1.1.14" evidence="1"/>
<dbReference type="EMBL" id="AE015929">
    <property type="protein sequence ID" value="AAO06025.1"/>
    <property type="molecule type" value="Genomic_DNA"/>
</dbReference>
<dbReference type="RefSeq" id="NP_765937.1">
    <property type="nucleotide sequence ID" value="NC_004461.1"/>
</dbReference>
<dbReference type="RefSeq" id="WP_002437223.1">
    <property type="nucleotide sequence ID" value="NZ_WBME01000004.1"/>
</dbReference>
<dbReference type="SMR" id="Q8CMP5"/>
<dbReference type="GeneID" id="50019688"/>
<dbReference type="KEGG" id="sep:SE_2382"/>
<dbReference type="PATRIC" id="fig|176280.10.peg.2321"/>
<dbReference type="eggNOG" id="COG0620">
    <property type="taxonomic scope" value="Bacteria"/>
</dbReference>
<dbReference type="HOGENOM" id="CLU_013175_0_0_9"/>
<dbReference type="OrthoDB" id="244285at2"/>
<dbReference type="UniPathway" id="UPA00051">
    <property type="reaction ID" value="UER00082"/>
</dbReference>
<dbReference type="Proteomes" id="UP000001411">
    <property type="component" value="Chromosome"/>
</dbReference>
<dbReference type="GO" id="GO:0003871">
    <property type="term" value="F:5-methyltetrahydropteroyltriglutamate-homocysteine S-methyltransferase activity"/>
    <property type="evidence" value="ECO:0007669"/>
    <property type="project" value="UniProtKB-UniRule"/>
</dbReference>
<dbReference type="GO" id="GO:0008270">
    <property type="term" value="F:zinc ion binding"/>
    <property type="evidence" value="ECO:0007669"/>
    <property type="project" value="InterPro"/>
</dbReference>
<dbReference type="GO" id="GO:0009086">
    <property type="term" value="P:methionine biosynthetic process"/>
    <property type="evidence" value="ECO:0007669"/>
    <property type="project" value="UniProtKB-UniRule"/>
</dbReference>
<dbReference type="GO" id="GO:0032259">
    <property type="term" value="P:methylation"/>
    <property type="evidence" value="ECO:0007669"/>
    <property type="project" value="UniProtKB-KW"/>
</dbReference>
<dbReference type="CDD" id="cd03311">
    <property type="entry name" value="CIMS_C_terminal_like"/>
    <property type="match status" value="1"/>
</dbReference>
<dbReference type="CDD" id="cd03312">
    <property type="entry name" value="CIMS_N_terminal_like"/>
    <property type="match status" value="1"/>
</dbReference>
<dbReference type="Gene3D" id="3.20.20.210">
    <property type="match status" value="2"/>
</dbReference>
<dbReference type="HAMAP" id="MF_00172">
    <property type="entry name" value="Meth_synth"/>
    <property type="match status" value="1"/>
</dbReference>
<dbReference type="InterPro" id="IPR013215">
    <property type="entry name" value="Cbl-indep_Met_Synth_N"/>
</dbReference>
<dbReference type="InterPro" id="IPR006276">
    <property type="entry name" value="Cobalamin-indep_Met_synthase"/>
</dbReference>
<dbReference type="InterPro" id="IPR002629">
    <property type="entry name" value="Met_Synth_C/arc"/>
</dbReference>
<dbReference type="InterPro" id="IPR038071">
    <property type="entry name" value="UROD/MetE-like_sf"/>
</dbReference>
<dbReference type="NCBIfam" id="TIGR01371">
    <property type="entry name" value="met_syn_B12ind"/>
    <property type="match status" value="1"/>
</dbReference>
<dbReference type="NCBIfam" id="NF003556">
    <property type="entry name" value="PRK05222.1"/>
    <property type="match status" value="1"/>
</dbReference>
<dbReference type="PANTHER" id="PTHR30519">
    <property type="entry name" value="5-METHYLTETRAHYDROPTEROYLTRIGLUTAMATE--HOMOCYSTEINE METHYLTRANSFERASE"/>
    <property type="match status" value="1"/>
</dbReference>
<dbReference type="Pfam" id="PF08267">
    <property type="entry name" value="Meth_synt_1"/>
    <property type="match status" value="1"/>
</dbReference>
<dbReference type="Pfam" id="PF01717">
    <property type="entry name" value="Meth_synt_2"/>
    <property type="match status" value="1"/>
</dbReference>
<dbReference type="PIRSF" id="PIRSF000382">
    <property type="entry name" value="MeTrfase_B12_ind"/>
    <property type="match status" value="1"/>
</dbReference>
<dbReference type="SUPFAM" id="SSF51726">
    <property type="entry name" value="UROD/MetE-like"/>
    <property type="match status" value="2"/>
</dbReference>
<accession>Q8CMP5</accession>
<reference key="1">
    <citation type="journal article" date="2003" name="Mol. Microbiol.">
        <title>Genome-based analysis of virulence genes in a non-biofilm-forming Staphylococcus epidermidis strain (ATCC 12228).</title>
        <authorList>
            <person name="Zhang Y.-Q."/>
            <person name="Ren S.-X."/>
            <person name="Li H.-L."/>
            <person name="Wang Y.-X."/>
            <person name="Fu G."/>
            <person name="Yang J."/>
            <person name="Qin Z.-Q."/>
            <person name="Miao Y.-G."/>
            <person name="Wang W.-Y."/>
            <person name="Chen R.-S."/>
            <person name="Shen Y."/>
            <person name="Chen Z."/>
            <person name="Yuan Z.-H."/>
            <person name="Zhao G.-P."/>
            <person name="Qu D."/>
            <person name="Danchin A."/>
            <person name="Wen Y.-M."/>
        </authorList>
    </citation>
    <scope>NUCLEOTIDE SEQUENCE [LARGE SCALE GENOMIC DNA]</scope>
    <source>
        <strain>ATCC 12228 / FDA PCI 1200</strain>
    </source>
</reference>
<keyword id="KW-0028">Amino-acid biosynthesis</keyword>
<keyword id="KW-0479">Metal-binding</keyword>
<keyword id="KW-0486">Methionine biosynthesis</keyword>
<keyword id="KW-0489">Methyltransferase</keyword>
<keyword id="KW-0677">Repeat</keyword>
<keyword id="KW-0808">Transferase</keyword>
<keyword id="KW-0862">Zinc</keyword>
<name>METE_STAES</name>
<organism>
    <name type="scientific">Staphylococcus epidermidis (strain ATCC 12228 / FDA PCI 1200)</name>
    <dbReference type="NCBI Taxonomy" id="176280"/>
    <lineage>
        <taxon>Bacteria</taxon>
        <taxon>Bacillati</taxon>
        <taxon>Bacillota</taxon>
        <taxon>Bacilli</taxon>
        <taxon>Bacillales</taxon>
        <taxon>Staphylococcaceae</taxon>
        <taxon>Staphylococcus</taxon>
    </lineage>
</organism>